<keyword id="KW-0067">ATP-binding</keyword>
<keyword id="KW-0414">Isoprene biosynthesis</keyword>
<keyword id="KW-0418">Kinase</keyword>
<keyword id="KW-0547">Nucleotide-binding</keyword>
<keyword id="KW-1185">Reference proteome</keyword>
<keyword id="KW-0808">Transferase</keyword>
<protein>
    <recommendedName>
        <fullName evidence="1">4-diphosphocytidyl-2-C-methyl-D-erythritol kinase</fullName>
        <shortName evidence="1">CMK</shortName>
        <ecNumber evidence="1">2.7.1.148</ecNumber>
    </recommendedName>
    <alternativeName>
        <fullName evidence="1">4-(cytidine-5'-diphospho)-2-C-methyl-D-erythritol kinase</fullName>
    </alternativeName>
</protein>
<proteinExistence type="inferred from homology"/>
<comment type="function">
    <text evidence="1">Catalyzes the phosphorylation of the position 2 hydroxy group of 4-diphosphocytidyl-2C-methyl-D-erythritol.</text>
</comment>
<comment type="catalytic activity">
    <reaction evidence="1">
        <text>4-CDP-2-C-methyl-D-erythritol + ATP = 4-CDP-2-C-methyl-D-erythritol 2-phosphate + ADP + H(+)</text>
        <dbReference type="Rhea" id="RHEA:18437"/>
        <dbReference type="ChEBI" id="CHEBI:15378"/>
        <dbReference type="ChEBI" id="CHEBI:30616"/>
        <dbReference type="ChEBI" id="CHEBI:57823"/>
        <dbReference type="ChEBI" id="CHEBI:57919"/>
        <dbReference type="ChEBI" id="CHEBI:456216"/>
        <dbReference type="EC" id="2.7.1.148"/>
    </reaction>
</comment>
<comment type="pathway">
    <text evidence="1">Isoprenoid biosynthesis; isopentenyl diphosphate biosynthesis via DXP pathway; isopentenyl diphosphate from 1-deoxy-D-xylulose 5-phosphate: step 3/6.</text>
</comment>
<comment type="similarity">
    <text evidence="1">Belongs to the GHMP kinase family. IspE subfamily.</text>
</comment>
<evidence type="ECO:0000255" key="1">
    <source>
        <dbReference type="HAMAP-Rule" id="MF_00061"/>
    </source>
</evidence>
<accession>Q9RR89</accession>
<organism>
    <name type="scientific">Deinococcus radiodurans (strain ATCC 13939 / DSM 20539 / JCM 16871 / CCUG 27074 / LMG 4051 / NBRC 15346 / NCIMB 9279 / VKM B-1422 / R1)</name>
    <dbReference type="NCBI Taxonomy" id="243230"/>
    <lineage>
        <taxon>Bacteria</taxon>
        <taxon>Thermotogati</taxon>
        <taxon>Deinococcota</taxon>
        <taxon>Deinococci</taxon>
        <taxon>Deinococcales</taxon>
        <taxon>Deinococcaceae</taxon>
        <taxon>Deinococcus</taxon>
    </lineage>
</organism>
<sequence>MTHQPSPVIHHHFAPAKINLGLSVLGVRENGYHDLHSLMVPLTVGDELEIRPAGALTLRVEGADLPTDERNLVYRAARAYLDAAGAAGGADLVLHKRLPLASGLGGGSSDAASTLLALAELYPAPDHRPVDLPALALTLGADVPFFLLGGAALAEGVGERLTPVDDLPPVHLVLANAGAEVSAGDAYRWLDETGDFSGKLRLEAMRLALARGVEVPYFNSLQAGVLARVPSVLTTLEALADAGLHSVLMSGSGATCFGLAHDAAQAQAAAAALAQRCPGWWVTAAQVRLPLSDNSGGRT</sequence>
<dbReference type="EC" id="2.7.1.148" evidence="1"/>
<dbReference type="EMBL" id="AE000513">
    <property type="protein sequence ID" value="AAF12142.1"/>
    <property type="molecule type" value="Genomic_DNA"/>
</dbReference>
<dbReference type="PIR" id="E75254">
    <property type="entry name" value="E75254"/>
</dbReference>
<dbReference type="RefSeq" id="NP_296324.1">
    <property type="nucleotide sequence ID" value="NC_001263.1"/>
</dbReference>
<dbReference type="RefSeq" id="WP_010889229.1">
    <property type="nucleotide sequence ID" value="NC_001263.1"/>
</dbReference>
<dbReference type="SMR" id="Q9RR89"/>
<dbReference type="FunCoup" id="Q9RR89">
    <property type="interactions" value="385"/>
</dbReference>
<dbReference type="STRING" id="243230.DR_2605"/>
<dbReference type="PaxDb" id="243230-DR_2605"/>
<dbReference type="EnsemblBacteria" id="AAF12142">
    <property type="protein sequence ID" value="AAF12142"/>
    <property type="gene ID" value="DR_2605"/>
</dbReference>
<dbReference type="GeneID" id="69518859"/>
<dbReference type="KEGG" id="dra:DR_2605"/>
<dbReference type="PATRIC" id="fig|243230.17.peg.2852"/>
<dbReference type="eggNOG" id="COG1947">
    <property type="taxonomic scope" value="Bacteria"/>
</dbReference>
<dbReference type="HOGENOM" id="CLU_053057_1_1_0"/>
<dbReference type="InParanoid" id="Q9RR89"/>
<dbReference type="OrthoDB" id="9809438at2"/>
<dbReference type="UniPathway" id="UPA00056">
    <property type="reaction ID" value="UER00094"/>
</dbReference>
<dbReference type="Proteomes" id="UP000002524">
    <property type="component" value="Chromosome 1"/>
</dbReference>
<dbReference type="GO" id="GO:0050515">
    <property type="term" value="F:4-(cytidine 5'-diphospho)-2-C-methyl-D-erythritol kinase activity"/>
    <property type="evidence" value="ECO:0000318"/>
    <property type="project" value="GO_Central"/>
</dbReference>
<dbReference type="GO" id="GO:0005524">
    <property type="term" value="F:ATP binding"/>
    <property type="evidence" value="ECO:0007669"/>
    <property type="project" value="UniProtKB-UniRule"/>
</dbReference>
<dbReference type="GO" id="GO:0019288">
    <property type="term" value="P:isopentenyl diphosphate biosynthetic process, methylerythritol 4-phosphate pathway"/>
    <property type="evidence" value="ECO:0007669"/>
    <property type="project" value="UniProtKB-UniRule"/>
</dbReference>
<dbReference type="GO" id="GO:0016114">
    <property type="term" value="P:terpenoid biosynthetic process"/>
    <property type="evidence" value="ECO:0007669"/>
    <property type="project" value="InterPro"/>
</dbReference>
<dbReference type="Gene3D" id="3.30.230.10">
    <property type="match status" value="1"/>
</dbReference>
<dbReference type="Gene3D" id="3.30.70.890">
    <property type="entry name" value="GHMP kinase, C-terminal domain"/>
    <property type="match status" value="1"/>
</dbReference>
<dbReference type="HAMAP" id="MF_00061">
    <property type="entry name" value="IspE"/>
    <property type="match status" value="1"/>
</dbReference>
<dbReference type="InterPro" id="IPR013750">
    <property type="entry name" value="GHMP_kinase_C_dom"/>
</dbReference>
<dbReference type="InterPro" id="IPR036554">
    <property type="entry name" value="GHMP_kinase_C_sf"/>
</dbReference>
<dbReference type="InterPro" id="IPR006204">
    <property type="entry name" value="GHMP_kinase_N_dom"/>
</dbReference>
<dbReference type="InterPro" id="IPR004424">
    <property type="entry name" value="IspE"/>
</dbReference>
<dbReference type="InterPro" id="IPR020568">
    <property type="entry name" value="Ribosomal_Su5_D2-typ_SF"/>
</dbReference>
<dbReference type="InterPro" id="IPR014721">
    <property type="entry name" value="Ribsml_uS5_D2-typ_fold_subgr"/>
</dbReference>
<dbReference type="NCBIfam" id="TIGR00154">
    <property type="entry name" value="ispE"/>
    <property type="match status" value="1"/>
</dbReference>
<dbReference type="NCBIfam" id="NF011202">
    <property type="entry name" value="PRK14608.1"/>
    <property type="match status" value="1"/>
</dbReference>
<dbReference type="PANTHER" id="PTHR43527">
    <property type="entry name" value="4-DIPHOSPHOCYTIDYL-2-C-METHYL-D-ERYTHRITOL KINASE, CHLOROPLASTIC"/>
    <property type="match status" value="1"/>
</dbReference>
<dbReference type="PANTHER" id="PTHR43527:SF2">
    <property type="entry name" value="4-DIPHOSPHOCYTIDYL-2-C-METHYL-D-ERYTHRITOL KINASE, CHLOROPLASTIC"/>
    <property type="match status" value="1"/>
</dbReference>
<dbReference type="Pfam" id="PF08544">
    <property type="entry name" value="GHMP_kinases_C"/>
    <property type="match status" value="1"/>
</dbReference>
<dbReference type="Pfam" id="PF00288">
    <property type="entry name" value="GHMP_kinases_N"/>
    <property type="match status" value="1"/>
</dbReference>
<dbReference type="PIRSF" id="PIRSF010376">
    <property type="entry name" value="IspE"/>
    <property type="match status" value="1"/>
</dbReference>
<dbReference type="SUPFAM" id="SSF55060">
    <property type="entry name" value="GHMP Kinase, C-terminal domain"/>
    <property type="match status" value="1"/>
</dbReference>
<dbReference type="SUPFAM" id="SSF54211">
    <property type="entry name" value="Ribosomal protein S5 domain 2-like"/>
    <property type="match status" value="1"/>
</dbReference>
<reference key="1">
    <citation type="journal article" date="1999" name="Science">
        <title>Genome sequence of the radioresistant bacterium Deinococcus radiodurans R1.</title>
        <authorList>
            <person name="White O."/>
            <person name="Eisen J.A."/>
            <person name="Heidelberg J.F."/>
            <person name="Hickey E.K."/>
            <person name="Peterson J.D."/>
            <person name="Dodson R.J."/>
            <person name="Haft D.H."/>
            <person name="Gwinn M.L."/>
            <person name="Nelson W.C."/>
            <person name="Richardson D.L."/>
            <person name="Moffat K.S."/>
            <person name="Qin H."/>
            <person name="Jiang L."/>
            <person name="Pamphile W."/>
            <person name="Crosby M."/>
            <person name="Shen M."/>
            <person name="Vamathevan J.J."/>
            <person name="Lam P."/>
            <person name="McDonald L.A."/>
            <person name="Utterback T.R."/>
            <person name="Zalewski C."/>
            <person name="Makarova K.S."/>
            <person name="Aravind L."/>
            <person name="Daly M.J."/>
            <person name="Minton K.W."/>
            <person name="Fleischmann R.D."/>
            <person name="Ketchum K.A."/>
            <person name="Nelson K.E."/>
            <person name="Salzberg S.L."/>
            <person name="Smith H.O."/>
            <person name="Venter J.C."/>
            <person name="Fraser C.M."/>
        </authorList>
    </citation>
    <scope>NUCLEOTIDE SEQUENCE [LARGE SCALE GENOMIC DNA]</scope>
    <source>
        <strain>ATCC 13939 / DSM 20539 / JCM 16871 / CCUG 27074 / LMG 4051 / NBRC 15346 / NCIMB 9279 / VKM B-1422 / R1</strain>
    </source>
</reference>
<feature type="chain" id="PRO_0000189213" description="4-diphosphocytidyl-2-C-methyl-D-erythritol kinase">
    <location>
        <begin position="1"/>
        <end position="299"/>
    </location>
</feature>
<feature type="active site" evidence="1">
    <location>
        <position position="17"/>
    </location>
</feature>
<feature type="active site" evidence="1">
    <location>
        <position position="142"/>
    </location>
</feature>
<feature type="binding site" evidence="1">
    <location>
        <begin position="99"/>
        <end position="109"/>
    </location>
    <ligand>
        <name>ATP</name>
        <dbReference type="ChEBI" id="CHEBI:30616"/>
    </ligand>
</feature>
<gene>
    <name evidence="1" type="primary">ispE</name>
    <name type="ordered locus">DR_2605</name>
</gene>
<name>ISPE_DEIRA</name>